<protein>
    <recommendedName>
        <fullName>GDP-mannose transporter 2</fullName>
        <shortName>GMT 2</shortName>
    </recommendedName>
</protein>
<proteinExistence type="inferred from homology"/>
<organism>
    <name type="scientific">Vanderwaltozyma polyspora (strain ATCC 22028 / DSM 70294 / BCRC 21397 / CBS 2163 / NBRC 10782 / NRRL Y-8283 / UCD 57-17)</name>
    <name type="common">Kluyveromyces polysporus</name>
    <dbReference type="NCBI Taxonomy" id="436907"/>
    <lineage>
        <taxon>Eukaryota</taxon>
        <taxon>Fungi</taxon>
        <taxon>Dikarya</taxon>
        <taxon>Ascomycota</taxon>
        <taxon>Saccharomycotina</taxon>
        <taxon>Saccharomycetes</taxon>
        <taxon>Saccharomycetales</taxon>
        <taxon>Saccharomycetaceae</taxon>
        <taxon>Vanderwaltozyma</taxon>
    </lineage>
</organism>
<reference key="1">
    <citation type="journal article" date="2007" name="Proc. Natl. Acad. Sci. U.S.A.">
        <title>Independent sorting-out of thousands of duplicated gene pairs in two yeast species descended from a whole-genome duplication.</title>
        <authorList>
            <person name="Scannell D.R."/>
            <person name="Frank A.C."/>
            <person name="Conant G.C."/>
            <person name="Byrne K.P."/>
            <person name="Woolfit M."/>
            <person name="Wolfe K.H."/>
        </authorList>
    </citation>
    <scope>NUCLEOTIDE SEQUENCE [LARGE SCALE GENOMIC DNA]</scope>
    <source>
        <strain>ATCC 22028 / DSM 70294 / BCRC 21397 / CBS 2163 / NBRC 10782 / NRRL Y-8283 / UCD 57-17</strain>
    </source>
</reference>
<sequence length="332" mass="36748">MSSLKVSQQDKKWVNSGSVAILAYCASSILMTITNKVVMSDRTFNMNFLLLFIQSLVCVITLLVLKVLGSVNFRSFNKTDARNWFPISICLVLMIFTSSKSLQYLSVPVYTIFKNLTIIVIAYGEVLFFGSSVGNMELGSFALMIVSSLIAAHGDYLHSVERLKKMLGPNVSFSFIVNIGYFWIAANCFASALFVLLMRKRIQVTNFKDFDTMFYNNVLSLPLLLLGSYLFEDWSQENLLPHVDIDNLSTMIISGLASVAISYCSGWCVRVTSSTTYSMVGALNKLPIALTGFLFNDAARNLSSAASILLGFASGIIYAVAKQKKLQNSEKI</sequence>
<comment type="function">
    <text evidence="1">Involved in the import of GDP-mannose from the cytoplasm into the Golgi lumen.</text>
</comment>
<comment type="subunit">
    <text evidence="1">Homooligomer.</text>
</comment>
<comment type="subcellular location">
    <subcellularLocation>
        <location evidence="1">Golgi apparatus membrane</location>
        <topology evidence="1">Multi-pass membrane protein</topology>
    </subcellularLocation>
    <subcellularLocation>
        <location evidence="1">Cytoplasmic vesicle membrane</location>
        <topology evidence="1">Multi-pass membrane protein</topology>
    </subcellularLocation>
    <subcellularLocation>
        <location evidence="1">Endoplasmic reticulum membrane</location>
        <topology evidence="1">Multi-pass membrane protein</topology>
    </subcellularLocation>
</comment>
<comment type="similarity">
    <text evidence="3">Belongs to the TPT transporter family. SLC35D subfamily.</text>
</comment>
<accession>A7TES5</accession>
<feature type="chain" id="PRO_0000333539" description="GDP-mannose transporter 2">
    <location>
        <begin position="1"/>
        <end position="332"/>
    </location>
</feature>
<feature type="topological domain" description="Cytoplasmic" evidence="1">
    <location>
        <begin position="1"/>
        <end position="12"/>
    </location>
</feature>
<feature type="transmembrane region" description="Helical" evidence="2">
    <location>
        <begin position="13"/>
        <end position="33"/>
    </location>
</feature>
<feature type="topological domain" description="Lumenal" evidence="1">
    <location>
        <begin position="34"/>
        <end position="47"/>
    </location>
</feature>
<feature type="transmembrane region" description="Helical" evidence="2">
    <location>
        <begin position="48"/>
        <end position="68"/>
    </location>
</feature>
<feature type="topological domain" description="Cytoplasmic" evidence="1">
    <location>
        <begin position="69"/>
        <end position="84"/>
    </location>
</feature>
<feature type="transmembrane region" description="Helical" evidence="2">
    <location>
        <begin position="85"/>
        <end position="105"/>
    </location>
</feature>
<feature type="topological domain" description="Lumenal" evidence="1">
    <location>
        <begin position="106"/>
        <end position="108"/>
    </location>
</feature>
<feature type="transmembrane region" description="Helical" evidence="2">
    <location>
        <begin position="109"/>
        <end position="129"/>
    </location>
</feature>
<feature type="topological domain" description="Cytoplasmic" evidence="1">
    <location>
        <begin position="130"/>
        <end position="131"/>
    </location>
</feature>
<feature type="transmembrane region" description="Helical" evidence="2">
    <location>
        <begin position="132"/>
        <end position="152"/>
    </location>
</feature>
<feature type="topological domain" description="Lumenal" evidence="1">
    <location>
        <begin position="153"/>
        <end position="174"/>
    </location>
</feature>
<feature type="transmembrane region" description="Helical" evidence="2">
    <location>
        <begin position="175"/>
        <end position="195"/>
    </location>
</feature>
<feature type="topological domain" description="Cytoplasmic" evidence="1">
    <location>
        <begin position="196"/>
        <end position="211"/>
    </location>
</feature>
<feature type="transmembrane region" description="Helical" evidence="2">
    <location>
        <begin position="212"/>
        <end position="232"/>
    </location>
</feature>
<feature type="topological domain" description="Lumenal" evidence="1">
    <location>
        <begin position="233"/>
        <end position="248"/>
    </location>
</feature>
<feature type="transmembrane region" description="Helical" evidence="2">
    <location>
        <begin position="249"/>
        <end position="269"/>
    </location>
</feature>
<feature type="topological domain" description="Cytoplasmic" evidence="1">
    <location>
        <begin position="270"/>
        <end position="274"/>
    </location>
</feature>
<feature type="transmembrane region" description="Helical" evidence="2">
    <location>
        <begin position="275"/>
        <end position="295"/>
    </location>
</feature>
<feature type="topological domain" description="Lumenal" evidence="1">
    <location>
        <begin position="296"/>
        <end position="300"/>
    </location>
</feature>
<feature type="transmembrane region" description="Helical" evidence="2">
    <location>
        <begin position="301"/>
        <end position="321"/>
    </location>
</feature>
<feature type="topological domain" description="Cytoplasmic" evidence="1">
    <location>
        <begin position="322"/>
        <end position="332"/>
    </location>
</feature>
<feature type="glycosylation site" description="N-linked (GlcNAc...) asparagine" evidence="2">
    <location>
        <position position="170"/>
    </location>
</feature>
<feature type="glycosylation site" description="N-linked (GlcNAc...) asparagine" evidence="2">
    <location>
        <position position="247"/>
    </location>
</feature>
<keyword id="KW-0968">Cytoplasmic vesicle</keyword>
<keyword id="KW-0256">Endoplasmic reticulum</keyword>
<keyword id="KW-0325">Glycoprotein</keyword>
<keyword id="KW-0333">Golgi apparatus</keyword>
<keyword id="KW-0472">Membrane</keyword>
<keyword id="KW-1185">Reference proteome</keyword>
<keyword id="KW-0762">Sugar transport</keyword>
<keyword id="KW-0812">Transmembrane</keyword>
<keyword id="KW-1133">Transmembrane helix</keyword>
<keyword id="KW-0813">Transport</keyword>
<evidence type="ECO:0000250" key="1"/>
<evidence type="ECO:0000255" key="2"/>
<evidence type="ECO:0000305" key="3"/>
<dbReference type="EMBL" id="DS480381">
    <property type="protein sequence ID" value="EDO19171.1"/>
    <property type="molecule type" value="Genomic_DNA"/>
</dbReference>
<dbReference type="RefSeq" id="XP_001647029.1">
    <property type="nucleotide sequence ID" value="XM_001646979.1"/>
</dbReference>
<dbReference type="SMR" id="A7TES5"/>
<dbReference type="GlyCosmos" id="A7TES5">
    <property type="glycosylation" value="2 sites, No reported glycans"/>
</dbReference>
<dbReference type="GeneID" id="5547502"/>
<dbReference type="KEGG" id="vpo:Kpol_1050p28"/>
<dbReference type="eggNOG" id="KOG1444">
    <property type="taxonomic scope" value="Eukaryota"/>
</dbReference>
<dbReference type="HOGENOM" id="CLU_025360_1_2_1"/>
<dbReference type="InParanoid" id="A7TES5"/>
<dbReference type="OMA" id="KLIRVWI"/>
<dbReference type="OrthoDB" id="417037at2759"/>
<dbReference type="PhylomeDB" id="A7TES5"/>
<dbReference type="Proteomes" id="UP000000267">
    <property type="component" value="Unassembled WGS sequence"/>
</dbReference>
<dbReference type="GO" id="GO:0030659">
    <property type="term" value="C:cytoplasmic vesicle membrane"/>
    <property type="evidence" value="ECO:0007669"/>
    <property type="project" value="UniProtKB-SubCell"/>
</dbReference>
<dbReference type="GO" id="GO:0005789">
    <property type="term" value="C:endoplasmic reticulum membrane"/>
    <property type="evidence" value="ECO:0007669"/>
    <property type="project" value="UniProtKB-SubCell"/>
</dbReference>
<dbReference type="GO" id="GO:0000139">
    <property type="term" value="C:Golgi membrane"/>
    <property type="evidence" value="ECO:0007669"/>
    <property type="project" value="UniProtKB-SubCell"/>
</dbReference>
<dbReference type="GO" id="GO:0055085">
    <property type="term" value="P:transmembrane transport"/>
    <property type="evidence" value="ECO:0007669"/>
    <property type="project" value="InterPro"/>
</dbReference>
<dbReference type="InterPro" id="IPR013657">
    <property type="entry name" value="SCL35B1-4/HUT1"/>
</dbReference>
<dbReference type="InterPro" id="IPR050186">
    <property type="entry name" value="TPT_transporter"/>
</dbReference>
<dbReference type="NCBIfam" id="TIGR00803">
    <property type="entry name" value="nst"/>
    <property type="match status" value="1"/>
</dbReference>
<dbReference type="PANTHER" id="PTHR11132">
    <property type="entry name" value="SOLUTE CARRIER FAMILY 35"/>
    <property type="match status" value="1"/>
</dbReference>
<dbReference type="Pfam" id="PF08449">
    <property type="entry name" value="UAA"/>
    <property type="match status" value="1"/>
</dbReference>
<dbReference type="SUPFAM" id="SSF103481">
    <property type="entry name" value="Multidrug resistance efflux transporter EmrE"/>
    <property type="match status" value="1"/>
</dbReference>
<name>GMT2_VANPO</name>
<gene>
    <name type="primary">VRG4-2</name>
    <name type="ORF">Kpol_1050p28</name>
</gene>